<protein>
    <recommendedName>
        <fullName>E3 UFM1-protein ligase 1 homolog</fullName>
        <ecNumber>2.3.2.-</ecNumber>
    </recommendedName>
    <alternativeName>
        <fullName evidence="3">E3 UFM1-protein transferase 1 homolog</fullName>
    </alternativeName>
</protein>
<evidence type="ECO:0000250" key="1">
    <source>
        <dbReference type="UniProtKB" id="O94874"/>
    </source>
</evidence>
<evidence type="ECO:0000256" key="2">
    <source>
        <dbReference type="SAM" id="MobiDB-lite"/>
    </source>
</evidence>
<evidence type="ECO:0000305" key="3"/>
<proteinExistence type="inferred from homology"/>
<comment type="function">
    <text evidence="1">E3 UFM1-protein ligase that mediates ufmylation of target proteins.</text>
</comment>
<comment type="similarity">
    <text evidence="3">Belongs to the UFL1 family.</text>
</comment>
<reference key="1">
    <citation type="journal article" date="2007" name="Nature">
        <title>Evolution of genes and genomes on the Drosophila phylogeny.</title>
        <authorList>
            <consortium name="Drosophila 12 genomes consortium"/>
        </authorList>
    </citation>
    <scope>NUCLEOTIDE SEQUENCE [LARGE SCALE GENOMIC DNA]</scope>
    <source>
        <strain>Tucson 14021-0224.01</strain>
    </source>
</reference>
<keyword id="KW-0808">Transferase</keyword>
<keyword id="KW-0833">Ubl conjugation pathway</keyword>
<sequence length="782" mass="87190">MGSDWDEIKRLAADFQKAQLTSTLQKLSERNCVEIVTLLLEKQMLEVVFTNDGKEYITPDHLEREIQDELYVNGGRANLVEVSKTLNVDLSRIEVLAERIAAENPSVHLVLGQLIDEDYISHIAQEINEKLVLRGEISISELASQFDLPSDFLQHDVVEKHLGKIIKGRQDAANPRVFFTQAYIQRCKAKIRGALAAITRPINVAVILQQIGVQEKIFHSLLDEIAPAGQVTSKLANSQYVPHIYAKTQADWVNSFYKQNSFLEYDAIQKLGISDAKSYIRKQFPNEEFLFLKRVALGARLVELTVVTALNECSATKQYLDLTTILPSNLSEEDIEEVFSTIMAQKHSNPSNFVYLDSIVFSQPYLAQLVQPCQALAESQAKAAIDGGVYQQYIVEKTLAQKGNASTQELEDDGKVDKRDERRKKASSGKAGGGAQGRETKTKSTKKHQRGKAAAHNDSDDEDDVQQGSRGGGGVNKKAVKPLELVKTADIVKLITASLEEEGLEHLSKPIAALYTNQFNQTALARAQELFEATPQTNRRQTHAAIQDRINTLLIDIRLYEKGLKLFPQDTQTQLVKYLLKSLGNDICNELSLYVAGECNLTVKNTNLNVDQRNKLAQECEAQYRAALLEQNKALNKSIDEFELATETVLKACSMIIKKVDKKKDRLLIADHKKKLQKQLLECQDPALLLHLAALILFTAISGSILHASGKFVSAILQHIRGSLNEEQNALLLRYHDLVLQVLQATPDSSESKMANEHLQAMQAQVVELAQNFSRASVSKAD</sequence>
<dbReference type="EC" id="2.3.2.-"/>
<dbReference type="EMBL" id="CH954181">
    <property type="protein sequence ID" value="EDV48094.1"/>
    <property type="molecule type" value="Genomic_DNA"/>
</dbReference>
<dbReference type="SMR" id="B3P2S2"/>
<dbReference type="EnsemblMetazoa" id="FBtr0130189">
    <property type="protein sequence ID" value="FBpp0128681"/>
    <property type="gene ID" value="FBgn0102446"/>
</dbReference>
<dbReference type="EnsemblMetazoa" id="XM_001979100.3">
    <property type="protein sequence ID" value="XP_001979136.1"/>
    <property type="gene ID" value="LOC6553192"/>
</dbReference>
<dbReference type="GeneID" id="6553192"/>
<dbReference type="KEGG" id="der:6553192"/>
<dbReference type="CTD" id="23376"/>
<dbReference type="eggNOG" id="KOG2235">
    <property type="taxonomic scope" value="Eukaryota"/>
</dbReference>
<dbReference type="HOGENOM" id="CLU_012417_1_1_1"/>
<dbReference type="OMA" id="CILHASG"/>
<dbReference type="OrthoDB" id="10258297at2759"/>
<dbReference type="PhylomeDB" id="B3P2S2"/>
<dbReference type="Proteomes" id="UP000008711">
    <property type="component" value="Unassembled WGS sequence"/>
</dbReference>
<dbReference type="GO" id="GO:0005789">
    <property type="term" value="C:endoplasmic reticulum membrane"/>
    <property type="evidence" value="ECO:0007669"/>
    <property type="project" value="TreeGrafter"/>
</dbReference>
<dbReference type="GO" id="GO:0061666">
    <property type="term" value="F:UFM1 ligase activity"/>
    <property type="evidence" value="ECO:0007669"/>
    <property type="project" value="EnsemblMetazoa"/>
</dbReference>
<dbReference type="GO" id="GO:1990592">
    <property type="term" value="P:protein K69-linked ufmylation"/>
    <property type="evidence" value="ECO:0007669"/>
    <property type="project" value="TreeGrafter"/>
</dbReference>
<dbReference type="GO" id="GO:0032434">
    <property type="term" value="P:regulation of proteasomal ubiquitin-dependent protein catabolic process"/>
    <property type="evidence" value="ECO:0007669"/>
    <property type="project" value="TreeGrafter"/>
</dbReference>
<dbReference type="GO" id="GO:0034976">
    <property type="term" value="P:response to endoplasmic reticulum stress"/>
    <property type="evidence" value="ECO:0007669"/>
    <property type="project" value="TreeGrafter"/>
</dbReference>
<dbReference type="InterPro" id="IPR018611">
    <property type="entry name" value="Ufl1"/>
</dbReference>
<dbReference type="InterPro" id="IPR056761">
    <property type="entry name" value="Ufl1-like_C"/>
</dbReference>
<dbReference type="InterPro" id="IPR056580">
    <property type="entry name" value="Ufl1_dom"/>
</dbReference>
<dbReference type="InterPro" id="IPR056579">
    <property type="entry name" value="Ufl1_N"/>
</dbReference>
<dbReference type="PANTHER" id="PTHR31057">
    <property type="entry name" value="E3 UFM1-PROTEIN LIGASE 1"/>
    <property type="match status" value="1"/>
</dbReference>
<dbReference type="PANTHER" id="PTHR31057:SF0">
    <property type="entry name" value="E3 UFM1-PROTEIN LIGASE 1"/>
    <property type="match status" value="1"/>
</dbReference>
<dbReference type="Pfam" id="PF09743">
    <property type="entry name" value="E3_UFM1_ligase"/>
    <property type="match status" value="1"/>
</dbReference>
<dbReference type="Pfam" id="PF23659">
    <property type="entry name" value="UFL1"/>
    <property type="match status" value="1"/>
</dbReference>
<dbReference type="Pfam" id="PF25041">
    <property type="entry name" value="UFL1_C"/>
    <property type="match status" value="1"/>
</dbReference>
<accession>B3P2S2</accession>
<name>UFL1_DROER</name>
<organism>
    <name type="scientific">Drosophila erecta</name>
    <name type="common">Fruit fly</name>
    <dbReference type="NCBI Taxonomy" id="7220"/>
    <lineage>
        <taxon>Eukaryota</taxon>
        <taxon>Metazoa</taxon>
        <taxon>Ecdysozoa</taxon>
        <taxon>Arthropoda</taxon>
        <taxon>Hexapoda</taxon>
        <taxon>Insecta</taxon>
        <taxon>Pterygota</taxon>
        <taxon>Neoptera</taxon>
        <taxon>Endopterygota</taxon>
        <taxon>Diptera</taxon>
        <taxon>Brachycera</taxon>
        <taxon>Muscomorpha</taxon>
        <taxon>Ephydroidea</taxon>
        <taxon>Drosophilidae</taxon>
        <taxon>Drosophila</taxon>
        <taxon>Sophophora</taxon>
    </lineage>
</organism>
<gene>
    <name type="ORF">GG10135</name>
</gene>
<feature type="chain" id="PRO_0000391880" description="E3 UFM1-protein ligase 1 homolog">
    <location>
        <begin position="1"/>
        <end position="782"/>
    </location>
</feature>
<feature type="region of interest" description="Disordered" evidence="2">
    <location>
        <begin position="404"/>
        <end position="477"/>
    </location>
</feature>
<feature type="compositionally biased region" description="Basic residues" evidence="2">
    <location>
        <begin position="443"/>
        <end position="453"/>
    </location>
</feature>